<feature type="chain" id="PRO_0000060827" description="Cytochrome b">
    <location>
        <begin position="1"/>
        <end position="379"/>
    </location>
</feature>
<feature type="transmembrane region" description="Helical" evidence="2">
    <location>
        <begin position="33"/>
        <end position="53"/>
    </location>
</feature>
<feature type="transmembrane region" description="Helical" evidence="2">
    <location>
        <begin position="77"/>
        <end position="98"/>
    </location>
</feature>
<feature type="transmembrane region" description="Helical" evidence="2">
    <location>
        <begin position="113"/>
        <end position="133"/>
    </location>
</feature>
<feature type="transmembrane region" description="Helical" evidence="2">
    <location>
        <begin position="178"/>
        <end position="198"/>
    </location>
</feature>
<feature type="transmembrane region" description="Helical" evidence="2">
    <location>
        <begin position="226"/>
        <end position="246"/>
    </location>
</feature>
<feature type="transmembrane region" description="Helical" evidence="2">
    <location>
        <begin position="288"/>
        <end position="308"/>
    </location>
</feature>
<feature type="transmembrane region" description="Helical" evidence="2">
    <location>
        <begin position="320"/>
        <end position="340"/>
    </location>
</feature>
<feature type="transmembrane region" description="Helical" evidence="2">
    <location>
        <begin position="347"/>
        <end position="367"/>
    </location>
</feature>
<feature type="binding site" description="axial binding residue" evidence="2">
    <location>
        <position position="83"/>
    </location>
    <ligand>
        <name>heme b</name>
        <dbReference type="ChEBI" id="CHEBI:60344"/>
        <label>b562</label>
    </ligand>
    <ligandPart>
        <name>Fe</name>
        <dbReference type="ChEBI" id="CHEBI:18248"/>
    </ligandPart>
</feature>
<feature type="binding site" description="axial binding residue" evidence="2">
    <location>
        <position position="97"/>
    </location>
    <ligand>
        <name>heme b</name>
        <dbReference type="ChEBI" id="CHEBI:60344"/>
        <label>b566</label>
    </ligand>
    <ligandPart>
        <name>Fe</name>
        <dbReference type="ChEBI" id="CHEBI:18248"/>
    </ligandPart>
</feature>
<feature type="binding site" description="axial binding residue" evidence="2">
    <location>
        <position position="182"/>
    </location>
    <ligand>
        <name>heme b</name>
        <dbReference type="ChEBI" id="CHEBI:60344"/>
        <label>b562</label>
    </ligand>
    <ligandPart>
        <name>Fe</name>
        <dbReference type="ChEBI" id="CHEBI:18248"/>
    </ligandPart>
</feature>
<feature type="binding site" description="axial binding residue" evidence="2">
    <location>
        <position position="196"/>
    </location>
    <ligand>
        <name>heme b</name>
        <dbReference type="ChEBI" id="CHEBI:60344"/>
        <label>b566</label>
    </ligand>
    <ligandPart>
        <name>Fe</name>
        <dbReference type="ChEBI" id="CHEBI:18248"/>
    </ligandPart>
</feature>
<feature type="binding site" evidence="2">
    <location>
        <position position="201"/>
    </location>
    <ligand>
        <name>a ubiquinone</name>
        <dbReference type="ChEBI" id="CHEBI:16389"/>
    </ligand>
</feature>
<feature type="sequence variant" description="In strain: Isolate SO-2000/12/21-1.">
    <original>S</original>
    <variation>F</variation>
    <location>
        <position position="246"/>
    </location>
</feature>
<proteinExistence type="inferred from homology"/>
<gene>
    <name type="primary">MT-CYB</name>
    <name type="synonym">COB</name>
    <name type="synonym">CYTB</name>
    <name type="synonym">MTCYB</name>
</gene>
<accession>Q94QP2</accession>
<accession>Q9B5Z0</accession>
<protein>
    <recommendedName>
        <fullName>Cytochrome b</fullName>
    </recommendedName>
    <alternativeName>
        <fullName>Complex III subunit 3</fullName>
    </alternativeName>
    <alternativeName>
        <fullName>Complex III subunit III</fullName>
    </alternativeName>
    <alternativeName>
        <fullName>Cytochrome b-c1 complex subunit 3</fullName>
    </alternativeName>
    <alternativeName>
        <fullName>Ubiquinol-cytochrome-c reductase complex cytochrome b subunit</fullName>
    </alternativeName>
</protein>
<reference key="1">
    <citation type="submission" date="2001-06" db="EMBL/GenBank/DDBJ databases">
        <title>Mitochondrial cytochrome b sequence of Crocidura kurodai.</title>
        <authorList>
            <person name="Ohdachi S."/>
            <person name="Oshida T."/>
            <person name="Lin L.K."/>
            <person name="Masuda R."/>
        </authorList>
    </citation>
    <scope>NUCLEOTIDE SEQUENCE [GENOMIC DNA]</scope>
    <source>
        <strain>Isolate SO-2000/12/21-1</strain>
        <strain>Isolate SO-2000/12/23-1</strain>
        <tissue>Liver</tissue>
    </source>
</reference>
<sequence>MNNIRKTHPLMKIVNSSFIDLPAPSNISSWWNFGSLLGICLVAQILTGLFLAMHYTSDTMTAFSSVTHICRDVNYGWLIRYLHANGASMFFICLFLHVGRGLYYGSYMYLETWNIGVLLLFAVMATAFMGYVLPWGQMSFWGATVITNLLSAIPYIGTNLVEWIWGGFSVDKATLTRFFAFHFILPFIVAALAGVHLLFLHETGSNNPSGLNSDTDKIPFHPYYTIKDILGALIMITALSSLVLFSPDLLGDPDNYIPANPLNTPPHIKPEWYFLFAYAILRSIPNKLGGVLALVLSIAILAIIPLLHTAKQRSMMFRPLSQCLFWILVADLFTLTWIGGQPVEHPFVVIGQLASVIYFMLILLIMPTTSMIENQLLKW</sequence>
<name>CYB_CRORK</name>
<geneLocation type="mitochondrion"/>
<keyword id="KW-0249">Electron transport</keyword>
<keyword id="KW-0349">Heme</keyword>
<keyword id="KW-0408">Iron</keyword>
<keyword id="KW-0472">Membrane</keyword>
<keyword id="KW-0479">Metal-binding</keyword>
<keyword id="KW-0496">Mitochondrion</keyword>
<keyword id="KW-0999">Mitochondrion inner membrane</keyword>
<keyword id="KW-0679">Respiratory chain</keyword>
<keyword id="KW-0812">Transmembrane</keyword>
<keyword id="KW-1133">Transmembrane helix</keyword>
<keyword id="KW-0813">Transport</keyword>
<keyword id="KW-0830">Ubiquinone</keyword>
<comment type="function">
    <text evidence="2">Component of the ubiquinol-cytochrome c reductase complex (complex III or cytochrome b-c1 complex) that is part of the mitochondrial respiratory chain. The b-c1 complex mediates electron transfer from ubiquinol to cytochrome c. Contributes to the generation of a proton gradient across the mitochondrial membrane that is then used for ATP synthesis.</text>
</comment>
<comment type="cofactor">
    <cofactor evidence="2">
        <name>heme b</name>
        <dbReference type="ChEBI" id="CHEBI:60344"/>
    </cofactor>
    <text evidence="2">Binds 2 heme b groups non-covalently.</text>
</comment>
<comment type="subunit">
    <text evidence="2">The cytochrome bc1 complex contains 11 subunits: 3 respiratory subunits (MT-CYB, CYC1 and UQCRFS1), 2 core proteins (UQCRC1 and UQCRC2) and 6 low-molecular weight proteins (UQCRH/QCR6, UQCRB/QCR7, UQCRQ/QCR8, UQCR10/QCR9, UQCR11/QCR10 and a cleavage product of UQCRFS1). This cytochrome bc1 complex then forms a dimer.</text>
</comment>
<comment type="subcellular location">
    <subcellularLocation>
        <location evidence="2">Mitochondrion inner membrane</location>
        <topology evidence="2">Multi-pass membrane protein</topology>
    </subcellularLocation>
</comment>
<comment type="miscellaneous">
    <text evidence="1">Heme 1 (or BL or b562) is low-potential and absorbs at about 562 nm, and heme 2 (or BH or b566) is high-potential and absorbs at about 566 nm.</text>
</comment>
<comment type="similarity">
    <text evidence="3 4">Belongs to the cytochrome b family.</text>
</comment>
<comment type="caution">
    <text evidence="2">The full-length protein contains only eight transmembrane helices, not nine as predicted by bioinformatics tools.</text>
</comment>
<organism>
    <name type="scientific">Crocidura rapax kurodai</name>
    <name type="common">Kuroda's shrew</name>
    <name type="synonym">Crocidura kurodai</name>
    <dbReference type="NCBI Taxonomy" id="155306"/>
    <lineage>
        <taxon>Eukaryota</taxon>
        <taxon>Metazoa</taxon>
        <taxon>Chordata</taxon>
        <taxon>Craniata</taxon>
        <taxon>Vertebrata</taxon>
        <taxon>Euteleostomi</taxon>
        <taxon>Mammalia</taxon>
        <taxon>Eutheria</taxon>
        <taxon>Laurasiatheria</taxon>
        <taxon>Eulipotyphla</taxon>
        <taxon>Soricidae</taxon>
        <taxon>Crocidurinae</taxon>
        <taxon>Crocidura</taxon>
    </lineage>
</organism>
<evidence type="ECO:0000250" key="1"/>
<evidence type="ECO:0000250" key="2">
    <source>
        <dbReference type="UniProtKB" id="P00157"/>
    </source>
</evidence>
<evidence type="ECO:0000255" key="3">
    <source>
        <dbReference type="PROSITE-ProRule" id="PRU00967"/>
    </source>
</evidence>
<evidence type="ECO:0000255" key="4">
    <source>
        <dbReference type="PROSITE-ProRule" id="PRU00968"/>
    </source>
</evidence>
<dbReference type="EMBL" id="AB057420">
    <property type="protein sequence ID" value="BAB40434.1"/>
    <property type="molecule type" value="Genomic_DNA"/>
</dbReference>
<dbReference type="EMBL" id="AB062686">
    <property type="protein sequence ID" value="BAB61737.1"/>
    <property type="molecule type" value="Genomic_DNA"/>
</dbReference>
<dbReference type="SMR" id="Q94QP2"/>
<dbReference type="GO" id="GO:0005743">
    <property type="term" value="C:mitochondrial inner membrane"/>
    <property type="evidence" value="ECO:0007669"/>
    <property type="project" value="UniProtKB-SubCell"/>
</dbReference>
<dbReference type="GO" id="GO:0045275">
    <property type="term" value="C:respiratory chain complex III"/>
    <property type="evidence" value="ECO:0007669"/>
    <property type="project" value="InterPro"/>
</dbReference>
<dbReference type="GO" id="GO:0046872">
    <property type="term" value="F:metal ion binding"/>
    <property type="evidence" value="ECO:0007669"/>
    <property type="project" value="UniProtKB-KW"/>
</dbReference>
<dbReference type="GO" id="GO:0008121">
    <property type="term" value="F:ubiquinol-cytochrome-c reductase activity"/>
    <property type="evidence" value="ECO:0007669"/>
    <property type="project" value="InterPro"/>
</dbReference>
<dbReference type="GO" id="GO:0006122">
    <property type="term" value="P:mitochondrial electron transport, ubiquinol to cytochrome c"/>
    <property type="evidence" value="ECO:0007669"/>
    <property type="project" value="TreeGrafter"/>
</dbReference>
<dbReference type="CDD" id="cd00290">
    <property type="entry name" value="cytochrome_b_C"/>
    <property type="match status" value="1"/>
</dbReference>
<dbReference type="CDD" id="cd00284">
    <property type="entry name" value="Cytochrome_b_N"/>
    <property type="match status" value="1"/>
</dbReference>
<dbReference type="FunFam" id="1.20.810.10:FF:000002">
    <property type="entry name" value="Cytochrome b"/>
    <property type="match status" value="1"/>
</dbReference>
<dbReference type="Gene3D" id="1.20.810.10">
    <property type="entry name" value="Cytochrome Bc1 Complex, Chain C"/>
    <property type="match status" value="1"/>
</dbReference>
<dbReference type="InterPro" id="IPR005798">
    <property type="entry name" value="Cyt_b/b6_C"/>
</dbReference>
<dbReference type="InterPro" id="IPR036150">
    <property type="entry name" value="Cyt_b/b6_C_sf"/>
</dbReference>
<dbReference type="InterPro" id="IPR005797">
    <property type="entry name" value="Cyt_b/b6_N"/>
</dbReference>
<dbReference type="InterPro" id="IPR027387">
    <property type="entry name" value="Cytb/b6-like_sf"/>
</dbReference>
<dbReference type="InterPro" id="IPR030689">
    <property type="entry name" value="Cytochrome_b"/>
</dbReference>
<dbReference type="InterPro" id="IPR048260">
    <property type="entry name" value="Cytochrome_b_C_euk/bac"/>
</dbReference>
<dbReference type="InterPro" id="IPR048259">
    <property type="entry name" value="Cytochrome_b_N_euk/bac"/>
</dbReference>
<dbReference type="InterPro" id="IPR016174">
    <property type="entry name" value="Di-haem_cyt_TM"/>
</dbReference>
<dbReference type="PANTHER" id="PTHR19271">
    <property type="entry name" value="CYTOCHROME B"/>
    <property type="match status" value="1"/>
</dbReference>
<dbReference type="PANTHER" id="PTHR19271:SF16">
    <property type="entry name" value="CYTOCHROME B"/>
    <property type="match status" value="1"/>
</dbReference>
<dbReference type="Pfam" id="PF00032">
    <property type="entry name" value="Cytochrom_B_C"/>
    <property type="match status" value="1"/>
</dbReference>
<dbReference type="Pfam" id="PF00033">
    <property type="entry name" value="Cytochrome_B"/>
    <property type="match status" value="1"/>
</dbReference>
<dbReference type="PIRSF" id="PIRSF038885">
    <property type="entry name" value="COB"/>
    <property type="match status" value="1"/>
</dbReference>
<dbReference type="SUPFAM" id="SSF81648">
    <property type="entry name" value="a domain/subunit of cytochrome bc1 complex (Ubiquinol-cytochrome c reductase)"/>
    <property type="match status" value="1"/>
</dbReference>
<dbReference type="SUPFAM" id="SSF81342">
    <property type="entry name" value="Transmembrane di-heme cytochromes"/>
    <property type="match status" value="1"/>
</dbReference>
<dbReference type="PROSITE" id="PS51003">
    <property type="entry name" value="CYTB_CTER"/>
    <property type="match status" value="1"/>
</dbReference>
<dbReference type="PROSITE" id="PS51002">
    <property type="entry name" value="CYTB_NTER"/>
    <property type="match status" value="1"/>
</dbReference>